<gene>
    <name evidence="1" type="primary">uppS</name>
    <name type="ordered locus">LJ_1496</name>
</gene>
<keyword id="KW-0460">Magnesium</keyword>
<keyword id="KW-0479">Metal-binding</keyword>
<keyword id="KW-0808">Transferase</keyword>
<accession>Q74IR9</accession>
<proteinExistence type="inferred from homology"/>
<protein>
    <recommendedName>
        <fullName evidence="1">Isoprenyl transferase</fullName>
        <ecNumber evidence="1">2.5.1.-</ecNumber>
    </recommendedName>
</protein>
<feature type="chain" id="PRO_0000123626" description="Isoprenyl transferase">
    <location>
        <begin position="1"/>
        <end position="239"/>
    </location>
</feature>
<feature type="active site" evidence="1">
    <location>
        <position position="16"/>
    </location>
</feature>
<feature type="active site" description="Proton acceptor" evidence="1">
    <location>
        <position position="64"/>
    </location>
</feature>
<feature type="binding site" evidence="1">
    <location>
        <position position="16"/>
    </location>
    <ligand>
        <name>Mg(2+)</name>
        <dbReference type="ChEBI" id="CHEBI:18420"/>
    </ligand>
</feature>
<feature type="binding site" evidence="1">
    <location>
        <begin position="17"/>
        <end position="20"/>
    </location>
    <ligand>
        <name>substrate</name>
    </ligand>
</feature>
<feature type="binding site" evidence="1">
    <location>
        <position position="21"/>
    </location>
    <ligand>
        <name>substrate</name>
    </ligand>
</feature>
<feature type="binding site" evidence="1">
    <location>
        <position position="29"/>
    </location>
    <ligand>
        <name>substrate</name>
    </ligand>
</feature>
<feature type="binding site" evidence="1">
    <location>
        <position position="33"/>
    </location>
    <ligand>
        <name>substrate</name>
    </ligand>
</feature>
<feature type="binding site" evidence="1">
    <location>
        <begin position="61"/>
        <end position="63"/>
    </location>
    <ligand>
        <name>substrate</name>
    </ligand>
</feature>
<feature type="binding site" evidence="1">
    <location>
        <position position="65"/>
    </location>
    <ligand>
        <name>substrate</name>
    </ligand>
</feature>
<feature type="binding site" evidence="1">
    <location>
        <position position="67"/>
    </location>
    <ligand>
        <name>substrate</name>
    </ligand>
</feature>
<feature type="binding site" evidence="1">
    <location>
        <position position="187"/>
    </location>
    <ligand>
        <name>substrate</name>
    </ligand>
</feature>
<feature type="binding site" evidence="1">
    <location>
        <begin position="193"/>
        <end position="195"/>
    </location>
    <ligand>
        <name>substrate</name>
    </ligand>
</feature>
<feature type="binding site" evidence="1">
    <location>
        <position position="206"/>
    </location>
    <ligand>
        <name>Mg(2+)</name>
        <dbReference type="ChEBI" id="CHEBI:18420"/>
    </ligand>
</feature>
<evidence type="ECO:0000255" key="1">
    <source>
        <dbReference type="HAMAP-Rule" id="MF_01139"/>
    </source>
</evidence>
<comment type="function">
    <text evidence="1">Catalyzes the condensation of isopentenyl diphosphate (IPP) with allylic pyrophosphates generating different type of terpenoids.</text>
</comment>
<comment type="cofactor">
    <cofactor evidence="1">
        <name>Mg(2+)</name>
        <dbReference type="ChEBI" id="CHEBI:18420"/>
    </cofactor>
    <text evidence="1">Binds 2 magnesium ions per subunit.</text>
</comment>
<comment type="subunit">
    <text evidence="1">Homodimer.</text>
</comment>
<comment type="similarity">
    <text evidence="1">Belongs to the UPP synthase family.</text>
</comment>
<reference key="1">
    <citation type="journal article" date="2004" name="Proc. Natl. Acad. Sci. U.S.A.">
        <title>The genome sequence of the probiotic intestinal bacterium Lactobacillus johnsonii NCC 533.</title>
        <authorList>
            <person name="Pridmore R.D."/>
            <person name="Berger B."/>
            <person name="Desiere F."/>
            <person name="Vilanova D."/>
            <person name="Barretto C."/>
            <person name="Pittet A.-C."/>
            <person name="Zwahlen M.-C."/>
            <person name="Rouvet M."/>
            <person name="Altermann E."/>
            <person name="Barrangou R."/>
            <person name="Mollet B."/>
            <person name="Mercenier A."/>
            <person name="Klaenhammer T."/>
            <person name="Arigoni F."/>
            <person name="Schell M.A."/>
        </authorList>
    </citation>
    <scope>NUCLEOTIDE SEQUENCE [LARGE SCALE GENOMIC DNA]</scope>
    <source>
        <strain>CNCM I-1225 / La1 / NCC 533</strain>
    </source>
</reference>
<organism>
    <name type="scientific">Lactobacillus johnsonii (strain CNCM I-12250 / La1 / NCC 533)</name>
    <dbReference type="NCBI Taxonomy" id="257314"/>
    <lineage>
        <taxon>Bacteria</taxon>
        <taxon>Bacillati</taxon>
        <taxon>Bacillota</taxon>
        <taxon>Bacilli</taxon>
        <taxon>Lactobacillales</taxon>
        <taxon>Lactobacillaceae</taxon>
        <taxon>Lactobacillus</taxon>
    </lineage>
</organism>
<sequence>MSESKKPLNHLAIIMDGNGRWAKKRHLPRFVGHRHGMDNIRNIALAANKLGIKVLTLYAFSTENWARPTDEVNYLMRLPIDFFDKFMPELMENNVRVNIMGFVDELPEKTYLVTQKAMAETANNTGMVLNFAFNYGSRREITAGVQEIARKVKVGEIDIDDISEKMVSDHLLTHSLAPYEDPDLLIRTSGEERLSNFLLWQMAYTEFSFSDKLWPDFDKTDLEELVKDYQGRNRRFGKV</sequence>
<name>ISPT_LACJO</name>
<dbReference type="EC" id="2.5.1.-" evidence="1"/>
<dbReference type="EMBL" id="AE017198">
    <property type="protein sequence ID" value="AAS09264.1"/>
    <property type="molecule type" value="Genomic_DNA"/>
</dbReference>
<dbReference type="RefSeq" id="WP_004897123.1">
    <property type="nucleotide sequence ID" value="NC_005362.1"/>
</dbReference>
<dbReference type="SMR" id="Q74IR9"/>
<dbReference type="KEGG" id="ljo:LJ_1496"/>
<dbReference type="eggNOG" id="COG0020">
    <property type="taxonomic scope" value="Bacteria"/>
</dbReference>
<dbReference type="HOGENOM" id="CLU_038505_1_1_9"/>
<dbReference type="Proteomes" id="UP000000581">
    <property type="component" value="Chromosome"/>
</dbReference>
<dbReference type="GO" id="GO:0005829">
    <property type="term" value="C:cytosol"/>
    <property type="evidence" value="ECO:0007669"/>
    <property type="project" value="TreeGrafter"/>
</dbReference>
<dbReference type="GO" id="GO:0008834">
    <property type="term" value="F:ditrans,polycis-undecaprenyl-diphosphate synthase [(2E,6E)-farnesyl-diphosphate specific] activity"/>
    <property type="evidence" value="ECO:0007669"/>
    <property type="project" value="TreeGrafter"/>
</dbReference>
<dbReference type="GO" id="GO:0000287">
    <property type="term" value="F:magnesium ion binding"/>
    <property type="evidence" value="ECO:0007669"/>
    <property type="project" value="UniProtKB-UniRule"/>
</dbReference>
<dbReference type="GO" id="GO:0030145">
    <property type="term" value="F:manganese ion binding"/>
    <property type="evidence" value="ECO:0007669"/>
    <property type="project" value="TreeGrafter"/>
</dbReference>
<dbReference type="GO" id="GO:0016094">
    <property type="term" value="P:polyprenol biosynthetic process"/>
    <property type="evidence" value="ECO:0007669"/>
    <property type="project" value="TreeGrafter"/>
</dbReference>
<dbReference type="CDD" id="cd00475">
    <property type="entry name" value="Cis_IPPS"/>
    <property type="match status" value="1"/>
</dbReference>
<dbReference type="FunFam" id="3.40.1180.10:FF:000001">
    <property type="entry name" value="(2E,6E)-farnesyl-diphosphate-specific ditrans,polycis-undecaprenyl-diphosphate synthase"/>
    <property type="match status" value="1"/>
</dbReference>
<dbReference type="Gene3D" id="3.40.1180.10">
    <property type="entry name" value="Decaprenyl diphosphate synthase-like"/>
    <property type="match status" value="1"/>
</dbReference>
<dbReference type="HAMAP" id="MF_01139">
    <property type="entry name" value="ISPT"/>
    <property type="match status" value="1"/>
</dbReference>
<dbReference type="InterPro" id="IPR001441">
    <property type="entry name" value="UPP_synth-like"/>
</dbReference>
<dbReference type="InterPro" id="IPR018520">
    <property type="entry name" value="UPP_synth-like_CS"/>
</dbReference>
<dbReference type="InterPro" id="IPR036424">
    <property type="entry name" value="UPP_synth-like_sf"/>
</dbReference>
<dbReference type="NCBIfam" id="NF011405">
    <property type="entry name" value="PRK14830.1"/>
    <property type="match status" value="1"/>
</dbReference>
<dbReference type="NCBIfam" id="TIGR00055">
    <property type="entry name" value="uppS"/>
    <property type="match status" value="1"/>
</dbReference>
<dbReference type="PANTHER" id="PTHR10291:SF0">
    <property type="entry name" value="DEHYDRODOLICHYL DIPHOSPHATE SYNTHASE 2"/>
    <property type="match status" value="1"/>
</dbReference>
<dbReference type="PANTHER" id="PTHR10291">
    <property type="entry name" value="DEHYDRODOLICHYL DIPHOSPHATE SYNTHASE FAMILY MEMBER"/>
    <property type="match status" value="1"/>
</dbReference>
<dbReference type="Pfam" id="PF01255">
    <property type="entry name" value="Prenyltransf"/>
    <property type="match status" value="1"/>
</dbReference>
<dbReference type="SUPFAM" id="SSF64005">
    <property type="entry name" value="Undecaprenyl diphosphate synthase"/>
    <property type="match status" value="1"/>
</dbReference>
<dbReference type="PROSITE" id="PS01066">
    <property type="entry name" value="UPP_SYNTHASE"/>
    <property type="match status" value="1"/>
</dbReference>